<proteinExistence type="evidence at protein level"/>
<keyword id="KW-0903">Direct protein sequencing</keyword>
<keyword id="KW-0235">DNA replication</keyword>
<keyword id="KW-0496">Mitochondrion</keyword>
<keyword id="KW-1185">Reference proteome</keyword>
<keyword id="KW-0809">Transit peptide</keyword>
<protein>
    <recommendedName>
        <fullName evidence="10">DNA polymerase subunit gamma-2, mitochondrial</fullName>
    </recommendedName>
    <alternativeName>
        <fullName evidence="7 9">DNA polymerase beta subunit</fullName>
    </alternativeName>
    <alternativeName>
        <fullName evidence="8">DNA polymerase gamma 35kD subunit</fullName>
    </alternativeName>
    <alternativeName>
        <fullName evidence="13">DNA polymerase gamma subunit 2</fullName>
    </alternativeName>
</protein>
<feature type="transit peptide" description="Mitochondrion" evidence="6">
    <location>
        <begin position="1"/>
        <end position="18"/>
    </location>
</feature>
<feature type="chain" id="PRO_0000448561" description="DNA polymerase subunit gamma-2, mitochondrial">
    <location>
        <begin position="19"/>
        <end position="361"/>
    </location>
</feature>
<feature type="mutagenesis site" description="Loss of mitochondrial DNA which disrupts mitochondrial morphology; larval brains are smaller due to defective cell proliferation leading to death at the pupal stage." evidence="2">
    <original>G</original>
    <variation>E</variation>
    <location>
        <position position="31"/>
    </location>
</feature>
<feature type="sequence conflict" description="In Ref. 1; AAC47536." evidence="10" ref="1">
    <original>K</original>
    <variation>R</variation>
    <location>
        <position position="56"/>
    </location>
</feature>
<feature type="sequence conflict" description="In Ref. 1; AAC47536." evidence="10" ref="1">
    <original>NSLFG</original>
    <variation>HSLFA</variation>
    <location>
        <begin position="108"/>
        <end position="112"/>
    </location>
</feature>
<feature type="sequence conflict" description="In Ref. 1; AAC47536." evidence="10" ref="1">
    <original>T</original>
    <variation>A</variation>
    <location>
        <position position="188"/>
    </location>
</feature>
<feature type="sequence conflict" description="In Ref. 1; AAC47536." evidence="10" ref="1">
    <original>I</original>
    <variation>T</variation>
    <location>
        <position position="213"/>
    </location>
</feature>
<comment type="function">
    <text evidence="2 3 4 5">As accessory component of the DNA polymerase gamma complex is involved in the replication of mitochondrial DNA (PubMed:3095323, PubMed:7499423). Does not bind DNA (PubMed:7499423). Essential for mitochondrial DNA maintenance and larval development (PubMed:11917141, PubMed:19924234).</text>
</comment>
<comment type="subunit">
    <text evidence="4 5 6">Component of the DNA polymerase gamma complex consisting of two subunits: the catalytic subunit DNApol-gamma/DNApolG1 and the accessory subunit PolG2/DNApol-gamma35.</text>
</comment>
<comment type="interaction">
    <interactant intactId="EBI-852898">
        <id>Q9VJV8</id>
    </interactant>
    <interactant intactId="EBI-122256">
        <id>Q27607</id>
        <label>PolG1</label>
    </interactant>
    <organismsDiffer>false</organismsDiffer>
    <experiments>2</experiments>
</comment>
<comment type="subcellular location">
    <subcellularLocation>
        <location evidence="6">Mitochondrion</location>
    </subcellularLocation>
</comment>
<comment type="tissue specificity">
    <text evidence="6">Expressed in ovaries (at protein level).</text>
</comment>
<comment type="developmental stage">
    <text evidence="1 4 6">Expressed in embryos (at protein level) (PubMed:3095323, PubMed:9153213). Expressed at low level in eggs (PubMed:10930405). Levels increase in early embryonic stages followed by a decrease in late embryos and a moderate increase in first-instar larvae (PubMed:10930405).</text>
</comment>
<dbReference type="EMBL" id="U94702">
    <property type="protein sequence ID" value="AAC47536.1"/>
    <property type="molecule type" value="mRNA"/>
</dbReference>
<dbReference type="EMBL" id="AE014134">
    <property type="protein sequence ID" value="AAF53341.2"/>
    <property type="molecule type" value="Genomic_DNA"/>
</dbReference>
<dbReference type="EMBL" id="AY051491">
    <property type="protein sequence ID" value="AAK92915.1"/>
    <property type="molecule type" value="mRNA"/>
</dbReference>
<dbReference type="RefSeq" id="NP_001027262.1">
    <property type="nucleotide sequence ID" value="NM_001032091.3"/>
</dbReference>
<dbReference type="SMR" id="Q9VJV8"/>
<dbReference type="ComplexPortal" id="CPX-2096">
    <property type="entry name" value="Mitochondrial DNA polymerase gamma complex"/>
</dbReference>
<dbReference type="FunCoup" id="Q9VJV8">
    <property type="interactions" value="94"/>
</dbReference>
<dbReference type="IntAct" id="Q9VJV8">
    <property type="interactions" value="2"/>
</dbReference>
<dbReference type="STRING" id="7227.FBpp0099758"/>
<dbReference type="PaxDb" id="7227-FBpp0099758"/>
<dbReference type="EnsemblMetazoa" id="FBtr0091627">
    <property type="protein sequence ID" value="FBpp0099758"/>
    <property type="gene ID" value="FBgn0004407"/>
</dbReference>
<dbReference type="GeneID" id="3772064"/>
<dbReference type="KEGG" id="dme:Dmel_CG33650"/>
<dbReference type="UCSC" id="CG33650-RA">
    <property type="organism name" value="d. melanogaster"/>
</dbReference>
<dbReference type="AGR" id="FB:FBgn0004407"/>
<dbReference type="CTD" id="11232"/>
<dbReference type="FlyBase" id="FBgn0004407">
    <property type="gene designation" value="PolG2"/>
</dbReference>
<dbReference type="VEuPathDB" id="VectorBase:FBgn0004407"/>
<dbReference type="eggNOG" id="KOG4247">
    <property type="taxonomic scope" value="Eukaryota"/>
</dbReference>
<dbReference type="GeneTree" id="ENSGT00940000153759"/>
<dbReference type="HOGENOM" id="CLU_834911_0_0_1"/>
<dbReference type="InParanoid" id="Q9VJV8"/>
<dbReference type="OMA" id="YQAIDIR"/>
<dbReference type="OrthoDB" id="5394539at2759"/>
<dbReference type="PhylomeDB" id="Q9VJV8"/>
<dbReference type="Reactome" id="R-DME-9913635">
    <property type="pathway name" value="Strand-asynchronous mitochondrial DNA replication"/>
</dbReference>
<dbReference type="BioGRID-ORCS" id="3772064">
    <property type="hits" value="0 hits in 1 CRISPR screen"/>
</dbReference>
<dbReference type="GenomeRNAi" id="3772064"/>
<dbReference type="PRO" id="PR:Q9VJV8"/>
<dbReference type="Proteomes" id="UP000000803">
    <property type="component" value="Chromosome 2L"/>
</dbReference>
<dbReference type="Bgee" id="FBgn0004407">
    <property type="expression patterns" value="Expressed in saliva-secreting gland and 11 other cell types or tissues"/>
</dbReference>
<dbReference type="GO" id="GO:0005737">
    <property type="term" value="C:cytoplasm"/>
    <property type="evidence" value="ECO:0000318"/>
    <property type="project" value="GO_Central"/>
</dbReference>
<dbReference type="GO" id="GO:0005760">
    <property type="term" value="C:gamma DNA polymerase complex"/>
    <property type="evidence" value="ECO:0000314"/>
    <property type="project" value="FlyBase"/>
</dbReference>
<dbReference type="GO" id="GO:0005759">
    <property type="term" value="C:mitochondrial matrix"/>
    <property type="evidence" value="ECO:0000303"/>
    <property type="project" value="ComplexPortal"/>
</dbReference>
<dbReference type="GO" id="GO:0005739">
    <property type="term" value="C:mitochondrion"/>
    <property type="evidence" value="ECO:0000314"/>
    <property type="project" value="FlyBase"/>
</dbReference>
<dbReference type="GO" id="GO:0030337">
    <property type="term" value="F:DNA polymerase processivity factor activity"/>
    <property type="evidence" value="ECO:0000250"/>
    <property type="project" value="FlyBase"/>
</dbReference>
<dbReference type="GO" id="GO:0071667">
    <property type="term" value="F:DNA/RNA hybrid binding"/>
    <property type="evidence" value="ECO:0000314"/>
    <property type="project" value="FlyBase"/>
</dbReference>
<dbReference type="GO" id="GO:0003727">
    <property type="term" value="F:single-stranded RNA binding"/>
    <property type="evidence" value="ECO:0000314"/>
    <property type="project" value="FlyBase"/>
</dbReference>
<dbReference type="GO" id="GO:0006261">
    <property type="term" value="P:DNA-templated DNA replication"/>
    <property type="evidence" value="ECO:0000314"/>
    <property type="project" value="FlyBase"/>
</dbReference>
<dbReference type="GO" id="GO:0006264">
    <property type="term" value="P:mitochondrial DNA replication"/>
    <property type="evidence" value="ECO:0000315"/>
    <property type="project" value="FlyBase"/>
</dbReference>
<dbReference type="GO" id="GO:0000002">
    <property type="term" value="P:mitochondrial genome maintenance"/>
    <property type="evidence" value="ECO:0000315"/>
    <property type="project" value="FlyBase"/>
</dbReference>
<dbReference type="CDD" id="cd02426">
    <property type="entry name" value="Pol_gamma_b_Cterm"/>
    <property type="match status" value="1"/>
</dbReference>
<dbReference type="FunFam" id="3.30.930.10:FF:000193">
    <property type="entry name" value="DNA polymerase gamma 35kD"/>
    <property type="match status" value="1"/>
</dbReference>
<dbReference type="FunFam" id="3.40.50.800:FF:000040">
    <property type="entry name" value="DNA polymerase gamma 35kD"/>
    <property type="match status" value="1"/>
</dbReference>
<dbReference type="Gene3D" id="3.40.50.800">
    <property type="entry name" value="Anticodon-binding domain"/>
    <property type="match status" value="1"/>
</dbReference>
<dbReference type="Gene3D" id="3.30.930.10">
    <property type="entry name" value="Bira Bifunctional Protein, Domain 2"/>
    <property type="match status" value="1"/>
</dbReference>
<dbReference type="InterPro" id="IPR045864">
    <property type="entry name" value="aa-tRNA-synth_II/BPL/LPL"/>
</dbReference>
<dbReference type="InterPro" id="IPR004154">
    <property type="entry name" value="Anticodon-bd"/>
</dbReference>
<dbReference type="InterPro" id="IPR036621">
    <property type="entry name" value="Anticodon-bd_dom_sf"/>
</dbReference>
<dbReference type="InterPro" id="IPR027031">
    <property type="entry name" value="Gly-tRNA_synthase/POLG2"/>
</dbReference>
<dbReference type="InterPro" id="IPR042064">
    <property type="entry name" value="POLG2_C"/>
</dbReference>
<dbReference type="PANTHER" id="PTHR10745:SF8">
    <property type="entry name" value="DNA POLYMERASE SUBUNIT GAMMA-2, MITOCHONDRIAL"/>
    <property type="match status" value="1"/>
</dbReference>
<dbReference type="PANTHER" id="PTHR10745">
    <property type="entry name" value="GLYCYL-TRNA SYNTHETASE/DNA POLYMERASE SUBUNIT GAMMA-2"/>
    <property type="match status" value="1"/>
</dbReference>
<dbReference type="Pfam" id="PF03129">
    <property type="entry name" value="HGTP_anticodon"/>
    <property type="match status" value="1"/>
</dbReference>
<dbReference type="SUPFAM" id="SSF52954">
    <property type="entry name" value="Class II aaRS ABD-related"/>
    <property type="match status" value="1"/>
</dbReference>
<organism evidence="14">
    <name type="scientific">Drosophila melanogaster</name>
    <name type="common">Fruit fly</name>
    <dbReference type="NCBI Taxonomy" id="7227"/>
    <lineage>
        <taxon>Eukaryota</taxon>
        <taxon>Metazoa</taxon>
        <taxon>Ecdysozoa</taxon>
        <taxon>Arthropoda</taxon>
        <taxon>Hexapoda</taxon>
        <taxon>Insecta</taxon>
        <taxon>Pterygota</taxon>
        <taxon>Neoptera</taxon>
        <taxon>Endopterygota</taxon>
        <taxon>Diptera</taxon>
        <taxon>Brachycera</taxon>
        <taxon>Muscomorpha</taxon>
        <taxon>Ephydroidea</taxon>
        <taxon>Drosophilidae</taxon>
        <taxon>Drosophila</taxon>
        <taxon>Sophophora</taxon>
    </lineage>
</organism>
<name>DPOG2_DROME</name>
<gene>
    <name evidence="13" type="primary">PolG2</name>
    <name evidence="13" type="synonym">DNApol-gamma</name>
    <name evidence="8" type="synonym">DNApol-gamma35</name>
    <name evidence="10" type="synonym">DNApolG2</name>
    <name evidence="13" type="synonym">l(2)34De</name>
    <name evidence="13" type="synonym">l(2)br16</name>
    <name evidence="13" type="synonym">MtPolB</name>
    <name evidence="7" type="synonym">pol gamma-beta</name>
    <name evidence="13" type="ORF">CG33650</name>
</gene>
<accession>Q9VJV8</accession>
<accession>O02005</accession>
<accession>Q9NKE7</accession>
<sequence>MSRIQRCFKSLASAGFFRTVEDNKLELLSHGREYAKLLQQHWTRLRPLAAHLGATKEPINPVNIQRFSFPQSQQFRNNFQKLVKDHPRKAKCPTLLKHQSTCSGPTSNSLFGIKGPTLHLTTDFLVEPHRALEHFYNMQRESKIWWMRLSSNPSRYRIVPCDLAEDLNPNDYQAIDIRTSYGDAGEVTVEQLSLVRIVDDKDFRLPDARTGEIVQPTVIRSVIELETTTCALLLDGCDHGRDSQSLLLHRVLAPYQCGIACVESDSELSADLSDLCQHLKHVLNHAGLRLSEGDGIRTTKNASHLAEHLLETDMLGIPYTLVINEQTLRNGLMQLRSRDTRLAETIHISDVPDYLLNIFKN</sequence>
<reference evidence="11" key="1">
    <citation type="journal article" date="1997" name="J. Biol. Chem.">
        <title>Accessory subunit of mitochondrial DNA polymerase from Drosophila embryos. Cloning, molecular analysis, and association in the native enzyme.</title>
        <authorList>
            <person name="Wang Y."/>
            <person name="Farr C.L."/>
            <person name="Kaguni L.S."/>
        </authorList>
    </citation>
    <scope>NUCLEOTIDE SEQUENCE [MRNA]</scope>
    <scope>PROTEIN SEQUENCE OF 19-37; 115-130; 158-196 AND 342-360</scope>
    <scope>IDENTIFICATION IN THE DNA POLYMERASE GAMMA COMPLEX</scope>
    <scope>SUBCELLULAR LOCATION</scope>
    <scope>TISSUE SPECIFICITY</scope>
    <scope>DEVELOPMENTAL STAGE</scope>
    <source>
        <tissue evidence="11">Ovary</tissue>
    </source>
</reference>
<reference evidence="14" key="2">
    <citation type="journal article" date="2000" name="Science">
        <title>The genome sequence of Drosophila melanogaster.</title>
        <authorList>
            <person name="Adams M.D."/>
            <person name="Celniker S.E."/>
            <person name="Holt R.A."/>
            <person name="Evans C.A."/>
            <person name="Gocayne J.D."/>
            <person name="Amanatides P.G."/>
            <person name="Scherer S.E."/>
            <person name="Li P.W."/>
            <person name="Hoskins R.A."/>
            <person name="Galle R.F."/>
            <person name="George R.A."/>
            <person name="Lewis S.E."/>
            <person name="Richards S."/>
            <person name="Ashburner M."/>
            <person name="Henderson S.N."/>
            <person name="Sutton G.G."/>
            <person name="Wortman J.R."/>
            <person name="Yandell M.D."/>
            <person name="Zhang Q."/>
            <person name="Chen L.X."/>
            <person name="Brandon R.C."/>
            <person name="Rogers Y.-H.C."/>
            <person name="Blazej R.G."/>
            <person name="Champe M."/>
            <person name="Pfeiffer B.D."/>
            <person name="Wan K.H."/>
            <person name="Doyle C."/>
            <person name="Baxter E.G."/>
            <person name="Helt G."/>
            <person name="Nelson C.R."/>
            <person name="Miklos G.L.G."/>
            <person name="Abril J.F."/>
            <person name="Agbayani A."/>
            <person name="An H.-J."/>
            <person name="Andrews-Pfannkoch C."/>
            <person name="Baldwin D."/>
            <person name="Ballew R.M."/>
            <person name="Basu A."/>
            <person name="Baxendale J."/>
            <person name="Bayraktaroglu L."/>
            <person name="Beasley E.M."/>
            <person name="Beeson K.Y."/>
            <person name="Benos P.V."/>
            <person name="Berman B.P."/>
            <person name="Bhandari D."/>
            <person name="Bolshakov S."/>
            <person name="Borkova D."/>
            <person name="Botchan M.R."/>
            <person name="Bouck J."/>
            <person name="Brokstein P."/>
            <person name="Brottier P."/>
            <person name="Burtis K.C."/>
            <person name="Busam D.A."/>
            <person name="Butler H."/>
            <person name="Cadieu E."/>
            <person name="Center A."/>
            <person name="Chandra I."/>
            <person name="Cherry J.M."/>
            <person name="Cawley S."/>
            <person name="Dahlke C."/>
            <person name="Davenport L.B."/>
            <person name="Davies P."/>
            <person name="de Pablos B."/>
            <person name="Delcher A."/>
            <person name="Deng Z."/>
            <person name="Mays A.D."/>
            <person name="Dew I."/>
            <person name="Dietz S.M."/>
            <person name="Dodson K."/>
            <person name="Doup L.E."/>
            <person name="Downes M."/>
            <person name="Dugan-Rocha S."/>
            <person name="Dunkov B.C."/>
            <person name="Dunn P."/>
            <person name="Durbin K.J."/>
            <person name="Evangelista C.C."/>
            <person name="Ferraz C."/>
            <person name="Ferriera S."/>
            <person name="Fleischmann W."/>
            <person name="Fosler C."/>
            <person name="Gabrielian A.E."/>
            <person name="Garg N.S."/>
            <person name="Gelbart W.M."/>
            <person name="Glasser K."/>
            <person name="Glodek A."/>
            <person name="Gong F."/>
            <person name="Gorrell J.H."/>
            <person name="Gu Z."/>
            <person name="Guan P."/>
            <person name="Harris M."/>
            <person name="Harris N.L."/>
            <person name="Harvey D.A."/>
            <person name="Heiman T.J."/>
            <person name="Hernandez J.R."/>
            <person name="Houck J."/>
            <person name="Hostin D."/>
            <person name="Houston K.A."/>
            <person name="Howland T.J."/>
            <person name="Wei M.-H."/>
            <person name="Ibegwam C."/>
            <person name="Jalali M."/>
            <person name="Kalush F."/>
            <person name="Karpen G.H."/>
            <person name="Ke Z."/>
            <person name="Kennison J.A."/>
            <person name="Ketchum K.A."/>
            <person name="Kimmel B.E."/>
            <person name="Kodira C.D."/>
            <person name="Kraft C.L."/>
            <person name="Kravitz S."/>
            <person name="Kulp D."/>
            <person name="Lai Z."/>
            <person name="Lasko P."/>
            <person name="Lei Y."/>
            <person name="Levitsky A.A."/>
            <person name="Li J.H."/>
            <person name="Li Z."/>
            <person name="Liang Y."/>
            <person name="Lin X."/>
            <person name="Liu X."/>
            <person name="Mattei B."/>
            <person name="McIntosh T.C."/>
            <person name="McLeod M.P."/>
            <person name="McPherson D."/>
            <person name="Merkulov G."/>
            <person name="Milshina N.V."/>
            <person name="Mobarry C."/>
            <person name="Morris J."/>
            <person name="Moshrefi A."/>
            <person name="Mount S.M."/>
            <person name="Moy M."/>
            <person name="Murphy B."/>
            <person name="Murphy L."/>
            <person name="Muzny D.M."/>
            <person name="Nelson D.L."/>
            <person name="Nelson D.R."/>
            <person name="Nelson K.A."/>
            <person name="Nixon K."/>
            <person name="Nusskern D.R."/>
            <person name="Pacleb J.M."/>
            <person name="Palazzolo M."/>
            <person name="Pittman G.S."/>
            <person name="Pan S."/>
            <person name="Pollard J."/>
            <person name="Puri V."/>
            <person name="Reese M.G."/>
            <person name="Reinert K."/>
            <person name="Remington K."/>
            <person name="Saunders R.D.C."/>
            <person name="Scheeler F."/>
            <person name="Shen H."/>
            <person name="Shue B.C."/>
            <person name="Siden-Kiamos I."/>
            <person name="Simpson M."/>
            <person name="Skupski M.P."/>
            <person name="Smith T.J."/>
            <person name="Spier E."/>
            <person name="Spradling A.C."/>
            <person name="Stapleton M."/>
            <person name="Strong R."/>
            <person name="Sun E."/>
            <person name="Svirskas R."/>
            <person name="Tector C."/>
            <person name="Turner R."/>
            <person name="Venter E."/>
            <person name="Wang A.H."/>
            <person name="Wang X."/>
            <person name="Wang Z.-Y."/>
            <person name="Wassarman D.A."/>
            <person name="Weinstock G.M."/>
            <person name="Weissenbach J."/>
            <person name="Williams S.M."/>
            <person name="Woodage T."/>
            <person name="Worley K.C."/>
            <person name="Wu D."/>
            <person name="Yang S."/>
            <person name="Yao Q.A."/>
            <person name="Ye J."/>
            <person name="Yeh R.-F."/>
            <person name="Zaveri J.S."/>
            <person name="Zhan M."/>
            <person name="Zhang G."/>
            <person name="Zhao Q."/>
            <person name="Zheng L."/>
            <person name="Zheng X.H."/>
            <person name="Zhong F.N."/>
            <person name="Zhong W."/>
            <person name="Zhou X."/>
            <person name="Zhu S.C."/>
            <person name="Zhu X."/>
            <person name="Smith H.O."/>
            <person name="Gibbs R.A."/>
            <person name="Myers E.W."/>
            <person name="Rubin G.M."/>
            <person name="Venter J.C."/>
        </authorList>
    </citation>
    <scope>NUCLEOTIDE SEQUENCE [LARGE SCALE GENOMIC DNA]</scope>
    <source>
        <strain evidence="14">Berkeley</strain>
    </source>
</reference>
<reference evidence="14" key="3">
    <citation type="journal article" date="2002" name="Genome Biol.">
        <title>Annotation of the Drosophila melanogaster euchromatic genome: a systematic review.</title>
        <authorList>
            <person name="Misra S."/>
            <person name="Crosby M.A."/>
            <person name="Mungall C.J."/>
            <person name="Matthews B.B."/>
            <person name="Campbell K.S."/>
            <person name="Hradecky P."/>
            <person name="Huang Y."/>
            <person name="Kaminker J.S."/>
            <person name="Millburn G.H."/>
            <person name="Prochnik S.E."/>
            <person name="Smith C.D."/>
            <person name="Tupy J.L."/>
            <person name="Whitfield E.J."/>
            <person name="Bayraktaroglu L."/>
            <person name="Berman B.P."/>
            <person name="Bettencourt B.R."/>
            <person name="Celniker S.E."/>
            <person name="de Grey A.D.N.J."/>
            <person name="Drysdale R.A."/>
            <person name="Harris N.L."/>
            <person name="Richter J."/>
            <person name="Russo S."/>
            <person name="Schroeder A.J."/>
            <person name="Shu S.Q."/>
            <person name="Stapleton M."/>
            <person name="Yamada C."/>
            <person name="Ashburner M."/>
            <person name="Gelbart W.M."/>
            <person name="Rubin G.M."/>
            <person name="Lewis S.E."/>
        </authorList>
    </citation>
    <scope>GENOME REANNOTATION</scope>
    <source>
        <strain evidence="14">Berkeley</strain>
    </source>
</reference>
<reference evidence="12" key="4">
    <citation type="journal article" date="2002" name="Genome Biol.">
        <title>A Drosophila full-length cDNA resource.</title>
        <authorList>
            <person name="Stapleton M."/>
            <person name="Carlson J.W."/>
            <person name="Brokstein P."/>
            <person name="Yu C."/>
            <person name="Champe M."/>
            <person name="George R.A."/>
            <person name="Guarin H."/>
            <person name="Kronmiller B."/>
            <person name="Pacleb J.M."/>
            <person name="Park S."/>
            <person name="Wan K.H."/>
            <person name="Rubin G.M."/>
            <person name="Celniker S.E."/>
        </authorList>
    </citation>
    <scope>NUCLEOTIDE SEQUENCE [LARGE SCALE MRNA]</scope>
    <source>
        <strain evidence="12">Berkeley</strain>
        <tissue evidence="12">Head</tissue>
    </source>
</reference>
<reference evidence="10" key="5">
    <citation type="journal article" date="1986" name="J. Biol. Chem.">
        <title>A mitochondrial DNA polymerase from embryos of Drosophila melanogaster. Purification, subunit structure, and partial characterization.</title>
        <authorList>
            <person name="Wernette C.M."/>
            <person name="Kaguni L.S."/>
        </authorList>
    </citation>
    <scope>FUNCTION</scope>
    <scope>IDENTIFICATION IN THE DNA POLYMERASE GAMMA COMPLEX</scope>
    <scope>DEVELOPMENTAL STAGE</scope>
</reference>
<reference evidence="10" key="6">
    <citation type="journal article" date="1995" name="J. Biol. Chem.">
        <title>Subunit structure of mitochondrial DNA polymerase from Drosophila embryos. Physical and immunological studies.</title>
        <authorList>
            <person name="Olson M.W."/>
            <person name="Wang Y."/>
            <person name="Elder R.H."/>
            <person name="Kaguni L.S."/>
        </authorList>
    </citation>
    <scope>FUNCTION</scope>
    <scope>IDENTIFICATION IN THE DNA POLYMERASE GAMMA COMPLEX</scope>
</reference>
<reference evidence="10" key="7">
    <citation type="journal article" date="2000" name="J. Biol. Chem.">
        <title>Differential regulation of the catalytic and accessory subunit genes of Drosophila mitochondrial DNA polymerase.</title>
        <authorList>
            <person name="Lefai E."/>
            <person name="Fernandez-Moreno M.A."/>
            <person name="Alahari A."/>
            <person name="Kaguni L.S."/>
            <person name="Garesse R."/>
        </authorList>
    </citation>
    <scope>DEVELOPMENTAL STAGE</scope>
</reference>
<reference evidence="10" key="8">
    <citation type="journal article" date="2002" name="Proc. Natl. Acad. Sci. U.S.A.">
        <title>The accessory subunit of DNA polymerase gamma is essential for mitochondrial DNA maintenance and development in Drosophila melanogaster.</title>
        <authorList>
            <person name="Iyengar B."/>
            <person name="Luo N."/>
            <person name="Farr C.L."/>
            <person name="Kaguni L.S."/>
            <person name="Campos A.R."/>
        </authorList>
    </citation>
    <scope>FUNCTION</scope>
    <scope>MUTAGENESIS OF GLY-31</scope>
</reference>
<reference evidence="10" key="9">
    <citation type="journal article" date="2009" name="PLoS ONE">
        <title>Disruption of mitochondrial DNA replication in Drosophila increases mitochondrial fast axonal transport in vivo.</title>
        <authorList>
            <person name="Baqri R.M."/>
            <person name="Turner B.A."/>
            <person name="Rheuben M.B."/>
            <person name="Hammond B.D."/>
            <person name="Kaguni L.S."/>
            <person name="Miller K.E."/>
        </authorList>
    </citation>
    <scope>FUNCTION</scope>
</reference>
<evidence type="ECO:0000269" key="1">
    <source>
    </source>
</evidence>
<evidence type="ECO:0000269" key="2">
    <source>
    </source>
</evidence>
<evidence type="ECO:0000269" key="3">
    <source>
    </source>
</evidence>
<evidence type="ECO:0000269" key="4">
    <source>
    </source>
</evidence>
<evidence type="ECO:0000269" key="5">
    <source>
    </source>
</evidence>
<evidence type="ECO:0000269" key="6">
    <source>
    </source>
</evidence>
<evidence type="ECO:0000303" key="7">
    <source>
    </source>
</evidence>
<evidence type="ECO:0000303" key="8">
    <source>
    </source>
</evidence>
<evidence type="ECO:0000303" key="9">
    <source>
    </source>
</evidence>
<evidence type="ECO:0000305" key="10"/>
<evidence type="ECO:0000312" key="11">
    <source>
        <dbReference type="EMBL" id="AAC47536.1"/>
    </source>
</evidence>
<evidence type="ECO:0000312" key="12">
    <source>
        <dbReference type="EMBL" id="AAK92915.1"/>
    </source>
</evidence>
<evidence type="ECO:0000312" key="13">
    <source>
        <dbReference type="FlyBase" id="FBgn0004407"/>
    </source>
</evidence>
<evidence type="ECO:0000312" key="14">
    <source>
        <dbReference type="Proteomes" id="UP000000803"/>
    </source>
</evidence>